<name>TNNC1_COTJA</name>
<proteinExistence type="evidence at transcript level"/>
<dbReference type="EMBL" id="M29722">
    <property type="protein sequence ID" value="AAA49502.1"/>
    <property type="molecule type" value="mRNA"/>
</dbReference>
<dbReference type="BMRB" id="P05936"/>
<dbReference type="SMR" id="P05936"/>
<dbReference type="Proteomes" id="UP000694412">
    <property type="component" value="Unplaced"/>
</dbReference>
<dbReference type="GO" id="GO:0016460">
    <property type="term" value="C:myosin II complex"/>
    <property type="evidence" value="ECO:0007669"/>
    <property type="project" value="TreeGrafter"/>
</dbReference>
<dbReference type="GO" id="GO:0005509">
    <property type="term" value="F:calcium ion binding"/>
    <property type="evidence" value="ECO:0000250"/>
    <property type="project" value="AgBase"/>
</dbReference>
<dbReference type="CDD" id="cd00051">
    <property type="entry name" value="EFh"/>
    <property type="match status" value="1"/>
</dbReference>
<dbReference type="FunFam" id="1.10.238.10:FF:000033">
    <property type="entry name" value="Troponin C, slow skeletal and cardiac muscles"/>
    <property type="match status" value="1"/>
</dbReference>
<dbReference type="Gene3D" id="1.10.238.10">
    <property type="entry name" value="EF-hand"/>
    <property type="match status" value="2"/>
</dbReference>
<dbReference type="InterPro" id="IPR050230">
    <property type="entry name" value="CALM/Myosin/TropC-like"/>
</dbReference>
<dbReference type="InterPro" id="IPR011992">
    <property type="entry name" value="EF-hand-dom_pair"/>
</dbReference>
<dbReference type="InterPro" id="IPR018247">
    <property type="entry name" value="EF_Hand_1_Ca_BS"/>
</dbReference>
<dbReference type="InterPro" id="IPR002048">
    <property type="entry name" value="EF_hand_dom"/>
</dbReference>
<dbReference type="PANTHER" id="PTHR23048">
    <property type="entry name" value="MYOSIN LIGHT CHAIN 1, 3"/>
    <property type="match status" value="1"/>
</dbReference>
<dbReference type="PANTHER" id="PTHR23048:SF47">
    <property type="entry name" value="TROPONIN C1, SLOW SKELETAL AND CARDIAC TYPE"/>
    <property type="match status" value="1"/>
</dbReference>
<dbReference type="Pfam" id="PF13499">
    <property type="entry name" value="EF-hand_7"/>
    <property type="match status" value="1"/>
</dbReference>
<dbReference type="Pfam" id="PF13833">
    <property type="entry name" value="EF-hand_8"/>
    <property type="match status" value="1"/>
</dbReference>
<dbReference type="PRINTS" id="PR00450">
    <property type="entry name" value="RECOVERIN"/>
</dbReference>
<dbReference type="SMART" id="SM00054">
    <property type="entry name" value="EFh"/>
    <property type="match status" value="4"/>
</dbReference>
<dbReference type="SUPFAM" id="SSF47473">
    <property type="entry name" value="EF-hand"/>
    <property type="match status" value="1"/>
</dbReference>
<dbReference type="PROSITE" id="PS00018">
    <property type="entry name" value="EF_HAND_1"/>
    <property type="match status" value="1"/>
</dbReference>
<dbReference type="PROSITE" id="PS50222">
    <property type="entry name" value="EF_HAND_2"/>
    <property type="match status" value="4"/>
</dbReference>
<comment type="function">
    <text>Troponin is the central regulatory protein of striated muscle contraction. Tn consists of three components: Tn-I which is the inhibitor of actomyosin ATPase, Tn-T which contains the binding site for tropomyosin and Tn-C. The binding of calcium to Tn-C abolishes the inhibitory action of Tn on actin filaments.</text>
</comment>
<comment type="miscellaneous">
    <text>Cardiac muscle Tn-C can bind 3 calcium ions per molecule. Domain I does not bind calcium.</text>
</comment>
<comment type="similarity">
    <text evidence="3">Belongs to the troponin C family.</text>
</comment>
<accession>P05936</accession>
<keyword id="KW-0007">Acetylation</keyword>
<keyword id="KW-0106">Calcium</keyword>
<keyword id="KW-0479">Metal-binding</keyword>
<keyword id="KW-0514">Muscle protein</keyword>
<keyword id="KW-1185">Reference proteome</keyword>
<keyword id="KW-0677">Repeat</keyword>
<protein>
    <recommendedName>
        <fullName>Troponin C, slow skeletal and cardiac muscles</fullName>
        <shortName>TN-C</shortName>
    </recommendedName>
</protein>
<gene>
    <name type="primary">TNNC1</name>
</gene>
<evidence type="ECO:0000250" key="1"/>
<evidence type="ECO:0000255" key="2">
    <source>
        <dbReference type="PROSITE-ProRule" id="PRU00448"/>
    </source>
</evidence>
<evidence type="ECO:0000305" key="3"/>
<reference key="1">
    <citation type="journal article" date="1987" name="Methods Enzymol.">
        <title>The cloning and the codon and amino acid sequence of the quail slow/cardiac troponin C cDNA.</title>
        <authorList>
            <person name="Maisonpierre P.C."/>
            <person name="Hastings K.E.M."/>
            <person name="Emerson C.P. Jr."/>
        </authorList>
    </citation>
    <scope>NUCLEOTIDE SEQUENCE [MRNA]</scope>
    <source>
        <tissue>Pectoralis muscle</tissue>
    </source>
</reference>
<organism>
    <name type="scientific">Coturnix japonica</name>
    <name type="common">Japanese quail</name>
    <name type="synonym">Coturnix coturnix japonica</name>
    <dbReference type="NCBI Taxonomy" id="93934"/>
    <lineage>
        <taxon>Eukaryota</taxon>
        <taxon>Metazoa</taxon>
        <taxon>Chordata</taxon>
        <taxon>Craniata</taxon>
        <taxon>Vertebrata</taxon>
        <taxon>Euteleostomi</taxon>
        <taxon>Archelosauria</taxon>
        <taxon>Archosauria</taxon>
        <taxon>Dinosauria</taxon>
        <taxon>Saurischia</taxon>
        <taxon>Theropoda</taxon>
        <taxon>Coelurosauria</taxon>
        <taxon>Aves</taxon>
        <taxon>Neognathae</taxon>
        <taxon>Galloanserae</taxon>
        <taxon>Galliformes</taxon>
        <taxon>Phasianidae</taxon>
        <taxon>Perdicinae</taxon>
        <taxon>Coturnix</taxon>
    </lineage>
</organism>
<sequence>MDDIYKAAVEQLTEEQKNEFKAAFDIFVLGAEDGCISTKELGKVMRMLGQNPTPEELQEMIDEVDEDGSGTVDFDQFLVMMVRCMKDDSKGKTEEELSDLFRMFDKNADGYIDLEELKIMLQATGETITEDDIEELMKDGNKNNDGRIDYDEFLQFMKGVE</sequence>
<feature type="chain" id="PRO_0000073702" description="Troponin C, slow skeletal and cardiac muscles">
    <location>
        <begin position="1"/>
        <end position="161"/>
    </location>
</feature>
<feature type="domain" description="EF-hand 1" evidence="2">
    <location>
        <begin position="16"/>
        <end position="51"/>
    </location>
</feature>
<feature type="domain" description="EF-hand 2" evidence="2">
    <location>
        <begin position="52"/>
        <end position="87"/>
    </location>
</feature>
<feature type="domain" description="EF-hand 3" evidence="2">
    <location>
        <begin position="92"/>
        <end position="127"/>
    </location>
</feature>
<feature type="domain" description="EF-hand 4" evidence="2">
    <location>
        <begin position="128"/>
        <end position="161"/>
    </location>
</feature>
<feature type="binding site" evidence="3">
    <location>
        <position position="65"/>
    </location>
    <ligand>
        <name>Ca(2+)</name>
        <dbReference type="ChEBI" id="CHEBI:29108"/>
        <label>1</label>
    </ligand>
</feature>
<feature type="binding site" evidence="3">
    <location>
        <position position="67"/>
    </location>
    <ligand>
        <name>Ca(2+)</name>
        <dbReference type="ChEBI" id="CHEBI:29108"/>
        <label>1</label>
    </ligand>
</feature>
<feature type="binding site" evidence="3">
    <location>
        <position position="69"/>
    </location>
    <ligand>
        <name>Ca(2+)</name>
        <dbReference type="ChEBI" id="CHEBI:29108"/>
        <label>1</label>
    </ligand>
</feature>
<feature type="binding site" evidence="3">
    <location>
        <position position="71"/>
    </location>
    <ligand>
        <name>Ca(2+)</name>
        <dbReference type="ChEBI" id="CHEBI:29108"/>
        <label>1</label>
    </ligand>
</feature>
<feature type="binding site" evidence="2">
    <location>
        <position position="105"/>
    </location>
    <ligand>
        <name>Ca(2+)</name>
        <dbReference type="ChEBI" id="CHEBI:29108"/>
        <label>2</label>
    </ligand>
</feature>
<feature type="binding site" evidence="2">
    <location>
        <position position="107"/>
    </location>
    <ligand>
        <name>Ca(2+)</name>
        <dbReference type="ChEBI" id="CHEBI:29108"/>
        <label>2</label>
    </ligand>
</feature>
<feature type="binding site" evidence="2">
    <location>
        <position position="109"/>
    </location>
    <ligand>
        <name>Ca(2+)</name>
        <dbReference type="ChEBI" id="CHEBI:29108"/>
        <label>2</label>
    </ligand>
</feature>
<feature type="binding site" evidence="2">
    <location>
        <position position="111"/>
    </location>
    <ligand>
        <name>Ca(2+)</name>
        <dbReference type="ChEBI" id="CHEBI:29108"/>
        <label>2</label>
    </ligand>
</feature>
<feature type="binding site" evidence="2">
    <location>
        <position position="116"/>
    </location>
    <ligand>
        <name>Ca(2+)</name>
        <dbReference type="ChEBI" id="CHEBI:29108"/>
        <label>2</label>
    </ligand>
</feature>
<feature type="binding site" evidence="3">
    <location>
        <position position="143"/>
    </location>
    <ligand>
        <name>Ca(2+)</name>
        <dbReference type="ChEBI" id="CHEBI:29108"/>
        <label>3</label>
    </ligand>
</feature>
<feature type="binding site" evidence="3">
    <location>
        <position position="145"/>
    </location>
    <ligand>
        <name>Ca(2+)</name>
        <dbReference type="ChEBI" id="CHEBI:29108"/>
        <label>3</label>
    </ligand>
</feature>
<feature type="binding site" evidence="3">
    <location>
        <position position="147"/>
    </location>
    <ligand>
        <name>Ca(2+)</name>
        <dbReference type="ChEBI" id="CHEBI:29108"/>
        <label>3</label>
    </ligand>
</feature>
<feature type="binding site" evidence="3">
    <location>
        <position position="152"/>
    </location>
    <ligand>
        <name>Ca(2+)</name>
        <dbReference type="ChEBI" id="CHEBI:29108"/>
        <label>3</label>
    </ligand>
</feature>
<feature type="modified residue" description="N-acetylmethionine" evidence="1">
    <location>
        <position position="1"/>
    </location>
</feature>
<feature type="sequence conflict" description="In Ref. 1; AAA49502." evidence="3" ref="1">
    <location>
        <position position="56"/>
    </location>
</feature>